<comment type="function">
    <text evidence="1">Catalyzes the condensation of isopentenyl diphosphate (IPP) with allylic pyrophosphates generating different type of terpenoids.</text>
</comment>
<comment type="cofactor">
    <cofactor evidence="1">
        <name>Mg(2+)</name>
        <dbReference type="ChEBI" id="CHEBI:18420"/>
    </cofactor>
    <text evidence="1">Binds 2 magnesium ions per subunit.</text>
</comment>
<comment type="subunit">
    <text evidence="1">Homodimer.</text>
</comment>
<comment type="similarity">
    <text evidence="1">Belongs to the UPP synthase family.</text>
</comment>
<proteinExistence type="inferred from homology"/>
<protein>
    <recommendedName>
        <fullName evidence="1">Isoprenyl transferase</fullName>
        <ecNumber evidence="1">2.5.1.-</ecNumber>
    </recommendedName>
</protein>
<dbReference type="EC" id="2.5.1.-" evidence="1"/>
<dbReference type="EMBL" id="CP000029">
    <property type="protein sequence ID" value="AAW54180.1"/>
    <property type="molecule type" value="Genomic_DNA"/>
</dbReference>
<dbReference type="RefSeq" id="WP_001832561.1">
    <property type="nucleotide sequence ID" value="NC_002976.3"/>
</dbReference>
<dbReference type="SMR" id="Q5HPT1"/>
<dbReference type="STRING" id="176279.SERP0827"/>
<dbReference type="KEGG" id="ser:SERP0827"/>
<dbReference type="eggNOG" id="COG0020">
    <property type="taxonomic scope" value="Bacteria"/>
</dbReference>
<dbReference type="HOGENOM" id="CLU_038505_1_1_9"/>
<dbReference type="Proteomes" id="UP000000531">
    <property type="component" value="Chromosome"/>
</dbReference>
<dbReference type="GO" id="GO:0005829">
    <property type="term" value="C:cytosol"/>
    <property type="evidence" value="ECO:0007669"/>
    <property type="project" value="TreeGrafter"/>
</dbReference>
<dbReference type="GO" id="GO:0008834">
    <property type="term" value="F:ditrans,polycis-undecaprenyl-diphosphate synthase [(2E,6E)-farnesyl-diphosphate specific] activity"/>
    <property type="evidence" value="ECO:0007669"/>
    <property type="project" value="TreeGrafter"/>
</dbReference>
<dbReference type="GO" id="GO:0000287">
    <property type="term" value="F:magnesium ion binding"/>
    <property type="evidence" value="ECO:0007669"/>
    <property type="project" value="UniProtKB-UniRule"/>
</dbReference>
<dbReference type="GO" id="GO:0030145">
    <property type="term" value="F:manganese ion binding"/>
    <property type="evidence" value="ECO:0007669"/>
    <property type="project" value="TreeGrafter"/>
</dbReference>
<dbReference type="GO" id="GO:0016094">
    <property type="term" value="P:polyprenol biosynthetic process"/>
    <property type="evidence" value="ECO:0007669"/>
    <property type="project" value="TreeGrafter"/>
</dbReference>
<dbReference type="CDD" id="cd00475">
    <property type="entry name" value="Cis_IPPS"/>
    <property type="match status" value="1"/>
</dbReference>
<dbReference type="FunFam" id="3.40.1180.10:FF:000001">
    <property type="entry name" value="(2E,6E)-farnesyl-diphosphate-specific ditrans,polycis-undecaprenyl-diphosphate synthase"/>
    <property type="match status" value="1"/>
</dbReference>
<dbReference type="Gene3D" id="3.40.1180.10">
    <property type="entry name" value="Decaprenyl diphosphate synthase-like"/>
    <property type="match status" value="1"/>
</dbReference>
<dbReference type="HAMAP" id="MF_01139">
    <property type="entry name" value="ISPT"/>
    <property type="match status" value="1"/>
</dbReference>
<dbReference type="InterPro" id="IPR001441">
    <property type="entry name" value="UPP_synth-like"/>
</dbReference>
<dbReference type="InterPro" id="IPR018520">
    <property type="entry name" value="UPP_synth-like_CS"/>
</dbReference>
<dbReference type="InterPro" id="IPR036424">
    <property type="entry name" value="UPP_synth-like_sf"/>
</dbReference>
<dbReference type="NCBIfam" id="NF011405">
    <property type="entry name" value="PRK14830.1"/>
    <property type="match status" value="1"/>
</dbReference>
<dbReference type="NCBIfam" id="TIGR00055">
    <property type="entry name" value="uppS"/>
    <property type="match status" value="1"/>
</dbReference>
<dbReference type="PANTHER" id="PTHR10291:SF0">
    <property type="entry name" value="DEHYDRODOLICHYL DIPHOSPHATE SYNTHASE 2"/>
    <property type="match status" value="1"/>
</dbReference>
<dbReference type="PANTHER" id="PTHR10291">
    <property type="entry name" value="DEHYDRODOLICHYL DIPHOSPHATE SYNTHASE FAMILY MEMBER"/>
    <property type="match status" value="1"/>
</dbReference>
<dbReference type="Pfam" id="PF01255">
    <property type="entry name" value="Prenyltransf"/>
    <property type="match status" value="1"/>
</dbReference>
<dbReference type="SUPFAM" id="SSF64005">
    <property type="entry name" value="Undecaprenyl diphosphate synthase"/>
    <property type="match status" value="1"/>
</dbReference>
<dbReference type="PROSITE" id="PS01066">
    <property type="entry name" value="UPP_SYNTHASE"/>
    <property type="match status" value="1"/>
</dbReference>
<feature type="chain" id="PRO_0000123678" description="Isoprenyl transferase">
    <location>
        <begin position="1"/>
        <end position="256"/>
    </location>
</feature>
<feature type="active site" evidence="1">
    <location>
        <position position="33"/>
    </location>
</feature>
<feature type="active site" description="Proton acceptor" evidence="1">
    <location>
        <position position="81"/>
    </location>
</feature>
<feature type="binding site" evidence="1">
    <location>
        <position position="33"/>
    </location>
    <ligand>
        <name>Mg(2+)</name>
        <dbReference type="ChEBI" id="CHEBI:18420"/>
    </ligand>
</feature>
<feature type="binding site" evidence="1">
    <location>
        <begin position="34"/>
        <end position="37"/>
    </location>
    <ligand>
        <name>substrate</name>
    </ligand>
</feature>
<feature type="binding site" evidence="1">
    <location>
        <position position="38"/>
    </location>
    <ligand>
        <name>substrate</name>
    </ligand>
</feature>
<feature type="binding site" evidence="1">
    <location>
        <position position="46"/>
    </location>
    <ligand>
        <name>substrate</name>
    </ligand>
</feature>
<feature type="binding site" evidence="1">
    <location>
        <position position="50"/>
    </location>
    <ligand>
        <name>substrate</name>
    </ligand>
</feature>
<feature type="binding site" evidence="1">
    <location>
        <begin position="78"/>
        <end position="80"/>
    </location>
    <ligand>
        <name>substrate</name>
    </ligand>
</feature>
<feature type="binding site" evidence="1">
    <location>
        <position position="82"/>
    </location>
    <ligand>
        <name>substrate</name>
    </ligand>
</feature>
<feature type="binding site" evidence="1">
    <location>
        <position position="84"/>
    </location>
    <ligand>
        <name>substrate</name>
    </ligand>
</feature>
<feature type="binding site" evidence="1">
    <location>
        <position position="201"/>
    </location>
    <ligand>
        <name>substrate</name>
    </ligand>
</feature>
<feature type="binding site" evidence="1">
    <location>
        <begin position="207"/>
        <end position="209"/>
    </location>
    <ligand>
        <name>substrate</name>
    </ligand>
</feature>
<feature type="binding site" evidence="1">
    <location>
        <position position="220"/>
    </location>
    <ligand>
        <name>Mg(2+)</name>
        <dbReference type="ChEBI" id="CHEBI:18420"/>
    </ligand>
</feature>
<name>ISPT_STAEQ</name>
<keyword id="KW-0460">Magnesium</keyword>
<keyword id="KW-0479">Metal-binding</keyword>
<keyword id="KW-1185">Reference proteome</keyword>
<keyword id="KW-0808">Transferase</keyword>
<sequence length="256" mass="29807">MFKKLKNKNKTETNHNNDLDIHNIPEHVAIIMDGNGRWAKKRKMPRIKGHYEGMQTIKKITREASDIGIKYLTLYAFSTENWSRPESEVNYIMNLPVNFLKTFLPELIEKNVKIETIGFYEGLPQSTIDAIDFAKAKTQHNTGLTLVFAINYGGRAEIIQSMKAIYNELQLNGQGSEVIDEALIKRHLMTHSYPDPDLLIRTSGEQRISNFLIWQASYSEFIFNEKLWPDFDEKELRECLKIYQSRQRRFGGLSEE</sequence>
<organism>
    <name type="scientific">Staphylococcus epidermidis (strain ATCC 35984 / DSM 28319 / BCRC 17069 / CCUG 31568 / BM 3577 / RP62A)</name>
    <dbReference type="NCBI Taxonomy" id="176279"/>
    <lineage>
        <taxon>Bacteria</taxon>
        <taxon>Bacillati</taxon>
        <taxon>Bacillota</taxon>
        <taxon>Bacilli</taxon>
        <taxon>Bacillales</taxon>
        <taxon>Staphylococcaceae</taxon>
        <taxon>Staphylococcus</taxon>
    </lineage>
</organism>
<evidence type="ECO:0000255" key="1">
    <source>
        <dbReference type="HAMAP-Rule" id="MF_01139"/>
    </source>
</evidence>
<gene>
    <name evidence="1" type="primary">uppS</name>
    <name type="ordered locus">SERP0827</name>
</gene>
<accession>Q5HPT1</accession>
<reference key="1">
    <citation type="journal article" date="2005" name="J. Bacteriol.">
        <title>Insights on evolution of virulence and resistance from the complete genome analysis of an early methicillin-resistant Staphylococcus aureus strain and a biofilm-producing methicillin-resistant Staphylococcus epidermidis strain.</title>
        <authorList>
            <person name="Gill S.R."/>
            <person name="Fouts D.E."/>
            <person name="Archer G.L."/>
            <person name="Mongodin E.F."/>
            <person name="DeBoy R.T."/>
            <person name="Ravel J."/>
            <person name="Paulsen I.T."/>
            <person name="Kolonay J.F."/>
            <person name="Brinkac L.M."/>
            <person name="Beanan M.J."/>
            <person name="Dodson R.J."/>
            <person name="Daugherty S.C."/>
            <person name="Madupu R."/>
            <person name="Angiuoli S.V."/>
            <person name="Durkin A.S."/>
            <person name="Haft D.H."/>
            <person name="Vamathevan J.J."/>
            <person name="Khouri H."/>
            <person name="Utterback T.R."/>
            <person name="Lee C."/>
            <person name="Dimitrov G."/>
            <person name="Jiang L."/>
            <person name="Qin H."/>
            <person name="Weidman J."/>
            <person name="Tran K."/>
            <person name="Kang K.H."/>
            <person name="Hance I.R."/>
            <person name="Nelson K.E."/>
            <person name="Fraser C.M."/>
        </authorList>
    </citation>
    <scope>NUCLEOTIDE SEQUENCE [LARGE SCALE GENOMIC DNA]</scope>
    <source>
        <strain>ATCC 35984 / DSM 28319 / BCRC 17069 / CCUG 31568 / BM 3577 / RP62A</strain>
    </source>
</reference>